<comment type="function">
    <text evidence="1">Catalyzes the reversible adenylation of nicotinate mononucleotide (NaMN) to nicotinic acid adenine dinucleotide (NaAD).</text>
</comment>
<comment type="catalytic activity">
    <reaction evidence="1">
        <text>nicotinate beta-D-ribonucleotide + ATP + H(+) = deamido-NAD(+) + diphosphate</text>
        <dbReference type="Rhea" id="RHEA:22860"/>
        <dbReference type="ChEBI" id="CHEBI:15378"/>
        <dbReference type="ChEBI" id="CHEBI:30616"/>
        <dbReference type="ChEBI" id="CHEBI:33019"/>
        <dbReference type="ChEBI" id="CHEBI:57502"/>
        <dbReference type="ChEBI" id="CHEBI:58437"/>
        <dbReference type="EC" id="2.7.7.18"/>
    </reaction>
</comment>
<comment type="pathway">
    <text evidence="1">Cofactor biosynthesis; NAD(+) biosynthesis; deamido-NAD(+) from nicotinate D-ribonucleotide: step 1/1.</text>
</comment>
<comment type="similarity">
    <text evidence="1">Belongs to the NadD family.</text>
</comment>
<keyword id="KW-0067">ATP-binding</keyword>
<keyword id="KW-0520">NAD</keyword>
<keyword id="KW-0547">Nucleotide-binding</keyword>
<keyword id="KW-0548">Nucleotidyltransferase</keyword>
<keyword id="KW-0662">Pyridine nucleotide biosynthesis</keyword>
<keyword id="KW-0808">Transferase</keyword>
<proteinExistence type="inferred from homology"/>
<name>NADD_CAMJ8</name>
<sequence length="181" mass="21344">MKIALFGGSFDPPHNGHNSVVLEALEKLDIDKLIIMPTYINPFKQSFSADEKQRFLWVKKLWGHLPKVEICDFETKQKRPVPSIESVKYLYKLYNPSKFYLLIGADHLEKLHLWHDFEKLNSLVEFVIANRNDIEIPKNFKDLKTDKKIASSFIRNTLNTNEVCEEIKDEVKKYYEKLQKN</sequence>
<organism>
    <name type="scientific">Campylobacter jejuni subsp. jejuni serotype O:6 (strain 81116 / NCTC 11828)</name>
    <dbReference type="NCBI Taxonomy" id="407148"/>
    <lineage>
        <taxon>Bacteria</taxon>
        <taxon>Pseudomonadati</taxon>
        <taxon>Campylobacterota</taxon>
        <taxon>Epsilonproteobacteria</taxon>
        <taxon>Campylobacterales</taxon>
        <taxon>Campylobacteraceae</taxon>
        <taxon>Campylobacter</taxon>
    </lineage>
</organism>
<gene>
    <name evidence="1" type="primary">nadD</name>
    <name type="ordered locus">C8J_1318</name>
</gene>
<accession>A8FN79</accession>
<dbReference type="EC" id="2.7.7.18" evidence="1"/>
<dbReference type="EMBL" id="CP000814">
    <property type="protein sequence ID" value="ABV52916.1"/>
    <property type="molecule type" value="Genomic_DNA"/>
</dbReference>
<dbReference type="RefSeq" id="WP_002862071.1">
    <property type="nucleotide sequence ID" value="NC_009839.1"/>
</dbReference>
<dbReference type="SMR" id="A8FN79"/>
<dbReference type="KEGG" id="cju:C8J_1318"/>
<dbReference type="HOGENOM" id="CLU_069765_3_1_7"/>
<dbReference type="UniPathway" id="UPA00253">
    <property type="reaction ID" value="UER00332"/>
</dbReference>
<dbReference type="GO" id="GO:0005524">
    <property type="term" value="F:ATP binding"/>
    <property type="evidence" value="ECO:0007669"/>
    <property type="project" value="UniProtKB-KW"/>
</dbReference>
<dbReference type="GO" id="GO:0004515">
    <property type="term" value="F:nicotinate-nucleotide adenylyltransferase activity"/>
    <property type="evidence" value="ECO:0007669"/>
    <property type="project" value="UniProtKB-UniRule"/>
</dbReference>
<dbReference type="GO" id="GO:0009435">
    <property type="term" value="P:NAD biosynthetic process"/>
    <property type="evidence" value="ECO:0007669"/>
    <property type="project" value="UniProtKB-UniRule"/>
</dbReference>
<dbReference type="CDD" id="cd02165">
    <property type="entry name" value="NMNAT"/>
    <property type="match status" value="1"/>
</dbReference>
<dbReference type="Gene3D" id="3.40.50.620">
    <property type="entry name" value="HUPs"/>
    <property type="match status" value="1"/>
</dbReference>
<dbReference type="HAMAP" id="MF_00244">
    <property type="entry name" value="NaMN_adenylyltr"/>
    <property type="match status" value="1"/>
</dbReference>
<dbReference type="InterPro" id="IPR004821">
    <property type="entry name" value="Cyt_trans-like"/>
</dbReference>
<dbReference type="InterPro" id="IPR005248">
    <property type="entry name" value="NadD/NMNAT"/>
</dbReference>
<dbReference type="InterPro" id="IPR014729">
    <property type="entry name" value="Rossmann-like_a/b/a_fold"/>
</dbReference>
<dbReference type="NCBIfam" id="TIGR00125">
    <property type="entry name" value="cyt_tran_rel"/>
    <property type="match status" value="1"/>
</dbReference>
<dbReference type="NCBIfam" id="TIGR00482">
    <property type="entry name" value="nicotinate (nicotinamide) nucleotide adenylyltransferase"/>
    <property type="match status" value="1"/>
</dbReference>
<dbReference type="PANTHER" id="PTHR39321">
    <property type="entry name" value="NICOTINATE-NUCLEOTIDE ADENYLYLTRANSFERASE-RELATED"/>
    <property type="match status" value="1"/>
</dbReference>
<dbReference type="PANTHER" id="PTHR39321:SF3">
    <property type="entry name" value="PHOSPHOPANTETHEINE ADENYLYLTRANSFERASE"/>
    <property type="match status" value="1"/>
</dbReference>
<dbReference type="Pfam" id="PF01467">
    <property type="entry name" value="CTP_transf_like"/>
    <property type="match status" value="1"/>
</dbReference>
<dbReference type="SUPFAM" id="SSF52374">
    <property type="entry name" value="Nucleotidylyl transferase"/>
    <property type="match status" value="1"/>
</dbReference>
<evidence type="ECO:0000255" key="1">
    <source>
        <dbReference type="HAMAP-Rule" id="MF_00244"/>
    </source>
</evidence>
<reference key="1">
    <citation type="journal article" date="2007" name="J. Bacteriol.">
        <title>The complete genome sequence of Campylobacter jejuni strain 81116 (NCTC11828).</title>
        <authorList>
            <person name="Pearson B.M."/>
            <person name="Gaskin D.J.H."/>
            <person name="Segers R.P.A.M."/>
            <person name="Wells J.M."/>
            <person name="Nuijten P.J.M."/>
            <person name="van Vliet A.H.M."/>
        </authorList>
    </citation>
    <scope>NUCLEOTIDE SEQUENCE [LARGE SCALE GENOMIC DNA]</scope>
    <source>
        <strain>81116 / NCTC 11828</strain>
    </source>
</reference>
<feature type="chain" id="PRO_1000071836" description="Probable nicotinate-nucleotide adenylyltransferase">
    <location>
        <begin position="1"/>
        <end position="181"/>
    </location>
</feature>
<protein>
    <recommendedName>
        <fullName evidence="1">Probable nicotinate-nucleotide adenylyltransferase</fullName>
        <ecNumber evidence="1">2.7.7.18</ecNumber>
    </recommendedName>
    <alternativeName>
        <fullName evidence="1">Deamido-NAD(+) diphosphorylase</fullName>
    </alternativeName>
    <alternativeName>
        <fullName evidence="1">Deamido-NAD(+) pyrophosphorylase</fullName>
    </alternativeName>
    <alternativeName>
        <fullName evidence="1">Nicotinate mononucleotide adenylyltransferase</fullName>
        <shortName evidence="1">NaMN adenylyltransferase</shortName>
    </alternativeName>
</protein>